<feature type="chain" id="PRO_0000220042" description="Enoyl-[acyl-carrier-protein] reductase [NADH]">
    <location>
        <begin position="1"/>
        <end position="406"/>
    </location>
</feature>
<feature type="active site" description="Proton donor" evidence="1">
    <location>
        <position position="236"/>
    </location>
</feature>
<feature type="binding site" evidence="1">
    <location>
        <begin position="48"/>
        <end position="53"/>
    </location>
    <ligand>
        <name>NAD(+)</name>
        <dbReference type="ChEBI" id="CHEBI:57540"/>
    </ligand>
</feature>
<feature type="binding site" evidence="1">
    <location>
        <begin position="74"/>
        <end position="75"/>
    </location>
    <ligand>
        <name>NAD(+)</name>
        <dbReference type="ChEBI" id="CHEBI:57540"/>
    </ligand>
</feature>
<feature type="binding site" evidence="1">
    <location>
        <begin position="111"/>
        <end position="112"/>
    </location>
    <ligand>
        <name>NAD(+)</name>
        <dbReference type="ChEBI" id="CHEBI:57540"/>
    </ligand>
</feature>
<feature type="binding site" evidence="1">
    <location>
        <begin position="140"/>
        <end position="141"/>
    </location>
    <ligand>
        <name>NAD(+)</name>
        <dbReference type="ChEBI" id="CHEBI:57540"/>
    </ligand>
</feature>
<feature type="binding site" evidence="1">
    <location>
        <position position="226"/>
    </location>
    <ligand>
        <name>substrate</name>
    </ligand>
</feature>
<feature type="binding site" evidence="1">
    <location>
        <position position="245"/>
    </location>
    <ligand>
        <name>NAD(+)</name>
        <dbReference type="ChEBI" id="CHEBI:57540"/>
    </ligand>
</feature>
<feature type="binding site" evidence="1">
    <location>
        <begin position="275"/>
        <end position="277"/>
    </location>
    <ligand>
        <name>NAD(+)</name>
        <dbReference type="ChEBI" id="CHEBI:57540"/>
    </ligand>
</feature>
<feature type="site" description="Plays an important role in discriminating NADH against NADPH" evidence="1">
    <location>
        <position position="75"/>
    </location>
</feature>
<keyword id="KW-0275">Fatty acid biosynthesis</keyword>
<keyword id="KW-0276">Fatty acid metabolism</keyword>
<keyword id="KW-0444">Lipid biosynthesis</keyword>
<keyword id="KW-0443">Lipid metabolism</keyword>
<keyword id="KW-0520">NAD</keyword>
<keyword id="KW-0560">Oxidoreductase</keyword>
<keyword id="KW-1185">Reference proteome</keyword>
<sequence>MIVQPKVRGFICTTAHPEGCARHVGEWINYAKQEPSLTGGPQKVLIIGASTGFGLASRIVAAFGAGAKTIGVFFERPASGKRTASPGWYNTAAFEKTALAAGLYAKSINGDAFSDEIKQQTIDLIQKDWQGGVDLVIYSIASPRRVHPRTGEIFNSVLKPIGQTYHNKTVDVMTGEVSPVSIEPATEKEIRDTEAVMGGDDWALWINALFKYNCLAEGVKTVAFTYIGPELTHAVYRNGTIGRAKLHLEKTARELDTQLESALSGQALISVNKALVTQASAAIPVVPLYISLLYKIMKEKNIHEGCIEQMWRLFKERLYSNQNIPTDSEGRIRIDDWEMREDVQAEIKRLWESINTGNVETVSDIAGYREDFYKLFGFGLNGIDYERGVEIEKAIPSITVTPENPE</sequence>
<gene>
    <name evidence="1" type="primary">fabV</name>
    <name type="ordered locus">CBU_0270</name>
</gene>
<evidence type="ECO:0000255" key="1">
    <source>
        <dbReference type="HAMAP-Rule" id="MF_01838"/>
    </source>
</evidence>
<proteinExistence type="inferred from homology"/>
<protein>
    <recommendedName>
        <fullName evidence="1">Enoyl-[acyl-carrier-protein] reductase [NADH]</fullName>
        <shortName evidence="1">ENR</shortName>
        <ecNumber evidence="1">1.3.1.9</ecNumber>
    </recommendedName>
</protein>
<accession>Q83EP5</accession>
<organism>
    <name type="scientific">Coxiella burnetii (strain RSA 493 / Nine Mile phase I)</name>
    <dbReference type="NCBI Taxonomy" id="227377"/>
    <lineage>
        <taxon>Bacteria</taxon>
        <taxon>Pseudomonadati</taxon>
        <taxon>Pseudomonadota</taxon>
        <taxon>Gammaproteobacteria</taxon>
        <taxon>Legionellales</taxon>
        <taxon>Coxiellaceae</taxon>
        <taxon>Coxiella</taxon>
    </lineage>
</organism>
<dbReference type="EC" id="1.3.1.9" evidence="1"/>
<dbReference type="EMBL" id="AE016828">
    <property type="protein sequence ID" value="AAO89828.1"/>
    <property type="molecule type" value="Genomic_DNA"/>
</dbReference>
<dbReference type="RefSeq" id="NP_819314.1">
    <property type="nucleotide sequence ID" value="NC_002971.3"/>
</dbReference>
<dbReference type="RefSeq" id="WP_010957471.1">
    <property type="nucleotide sequence ID" value="NC_002971.4"/>
</dbReference>
<dbReference type="SMR" id="Q83EP5"/>
<dbReference type="STRING" id="227377.CBU_0270"/>
<dbReference type="EnsemblBacteria" id="AAO89828">
    <property type="protein sequence ID" value="AAO89828"/>
    <property type="gene ID" value="CBU_0270"/>
</dbReference>
<dbReference type="GeneID" id="1208151"/>
<dbReference type="KEGG" id="cbu:CBU_0270"/>
<dbReference type="PATRIC" id="fig|227377.7.peg.264"/>
<dbReference type="eggNOG" id="COG3007">
    <property type="taxonomic scope" value="Bacteria"/>
</dbReference>
<dbReference type="HOGENOM" id="CLU_057698_1_0_6"/>
<dbReference type="OrthoDB" id="9802260at2"/>
<dbReference type="UniPathway" id="UPA00094"/>
<dbReference type="Proteomes" id="UP000002671">
    <property type="component" value="Chromosome"/>
</dbReference>
<dbReference type="GO" id="GO:0004318">
    <property type="term" value="F:enoyl-[acyl-carrier-protein] reductase (NADH) activity"/>
    <property type="evidence" value="ECO:0000318"/>
    <property type="project" value="GO_Central"/>
</dbReference>
<dbReference type="GO" id="GO:0051287">
    <property type="term" value="F:NAD binding"/>
    <property type="evidence" value="ECO:0000318"/>
    <property type="project" value="GO_Central"/>
</dbReference>
<dbReference type="GO" id="GO:0050343">
    <property type="term" value="F:trans-2-enoyl-CoA reductase (NADH) activity"/>
    <property type="evidence" value="ECO:0000318"/>
    <property type="project" value="GO_Central"/>
</dbReference>
<dbReference type="GO" id="GO:0006633">
    <property type="term" value="P:fatty acid biosynthetic process"/>
    <property type="evidence" value="ECO:0000318"/>
    <property type="project" value="GO_Central"/>
</dbReference>
<dbReference type="FunFam" id="3.40.50.720:FF:000221">
    <property type="entry name" value="Enoyl-[acyl-carrier-protein] reductase [NADH]"/>
    <property type="match status" value="1"/>
</dbReference>
<dbReference type="Gene3D" id="3.40.50.720">
    <property type="entry name" value="NAD(P)-binding Rossmann-like Domain"/>
    <property type="match status" value="1"/>
</dbReference>
<dbReference type="HAMAP" id="MF_01838">
    <property type="entry name" value="FabV_reductase"/>
    <property type="match status" value="1"/>
</dbReference>
<dbReference type="InterPro" id="IPR024906">
    <property type="entry name" value="Eno_Rdtase_FAD-bd_dom"/>
</dbReference>
<dbReference type="InterPro" id="IPR024910">
    <property type="entry name" value="Enoyl-CoA_Rdtase_cat_dom"/>
</dbReference>
<dbReference type="InterPro" id="IPR050048">
    <property type="entry name" value="FabV-like_NADH_b"/>
</dbReference>
<dbReference type="InterPro" id="IPR010758">
    <property type="entry name" value="Trans-2-enoyl-CoA_reductase"/>
</dbReference>
<dbReference type="NCBIfam" id="NF043048">
    <property type="entry name" value="EnoyACPredFabV"/>
    <property type="match status" value="1"/>
</dbReference>
<dbReference type="NCBIfam" id="NF010177">
    <property type="entry name" value="PRK13656.1"/>
    <property type="match status" value="1"/>
</dbReference>
<dbReference type="PANTHER" id="PTHR37480">
    <property type="entry name" value="ENOYL-[ACYL-CARRIER-PROTEIN] REDUCTASE [NADH]"/>
    <property type="match status" value="1"/>
</dbReference>
<dbReference type="PANTHER" id="PTHR37480:SF1">
    <property type="entry name" value="ENOYL-[ACYL-CARRIER-PROTEIN] REDUCTASE [NADH]"/>
    <property type="match status" value="1"/>
</dbReference>
<dbReference type="Pfam" id="PF07055">
    <property type="entry name" value="Eno-Rase_FAD_bd"/>
    <property type="match status" value="1"/>
</dbReference>
<dbReference type="Pfam" id="PF12242">
    <property type="entry name" value="Eno-Rase_NADH_b"/>
    <property type="match status" value="1"/>
</dbReference>
<dbReference type="Pfam" id="PF12241">
    <property type="entry name" value="Enoyl_reductase"/>
    <property type="match status" value="1"/>
</dbReference>
<reference key="1">
    <citation type="journal article" date="2003" name="Proc. Natl. Acad. Sci. U.S.A.">
        <title>Complete genome sequence of the Q-fever pathogen, Coxiella burnetii.</title>
        <authorList>
            <person name="Seshadri R."/>
            <person name="Paulsen I.T."/>
            <person name="Eisen J.A."/>
            <person name="Read T.D."/>
            <person name="Nelson K.E."/>
            <person name="Nelson W.C."/>
            <person name="Ward N.L."/>
            <person name="Tettelin H."/>
            <person name="Davidsen T.M."/>
            <person name="Beanan M.J."/>
            <person name="DeBoy R.T."/>
            <person name="Daugherty S.C."/>
            <person name="Brinkac L.M."/>
            <person name="Madupu R."/>
            <person name="Dodson R.J."/>
            <person name="Khouri H.M."/>
            <person name="Lee K.H."/>
            <person name="Carty H.A."/>
            <person name="Scanlan D."/>
            <person name="Heinzen R.A."/>
            <person name="Thompson H.A."/>
            <person name="Samuel J.E."/>
            <person name="Fraser C.M."/>
            <person name="Heidelberg J.F."/>
        </authorList>
    </citation>
    <scope>NUCLEOTIDE SEQUENCE [LARGE SCALE GENOMIC DNA]</scope>
    <source>
        <strain>RSA 493 / Nine Mile phase I</strain>
    </source>
</reference>
<name>FABV_COXBU</name>
<comment type="function">
    <text evidence="1">Involved in the final reduction of the elongation cycle of fatty acid synthesis (FAS II). Catalyzes the reduction of a carbon-carbon double bond in an enoyl moiety that is covalently linked to an acyl carrier protein (ACP).</text>
</comment>
<comment type="catalytic activity">
    <reaction evidence="1">
        <text>a 2,3-saturated acyl-[ACP] + NAD(+) = a (2E)-enoyl-[ACP] + NADH + H(+)</text>
        <dbReference type="Rhea" id="RHEA:10240"/>
        <dbReference type="Rhea" id="RHEA-COMP:9925"/>
        <dbReference type="Rhea" id="RHEA-COMP:9926"/>
        <dbReference type="ChEBI" id="CHEBI:15378"/>
        <dbReference type="ChEBI" id="CHEBI:57540"/>
        <dbReference type="ChEBI" id="CHEBI:57945"/>
        <dbReference type="ChEBI" id="CHEBI:78784"/>
        <dbReference type="ChEBI" id="CHEBI:78785"/>
        <dbReference type="EC" id="1.3.1.9"/>
    </reaction>
</comment>
<comment type="pathway">
    <text evidence="1">Lipid metabolism; fatty acid biosynthesis.</text>
</comment>
<comment type="subunit">
    <text evidence="1">Monomer.</text>
</comment>
<comment type="similarity">
    <text evidence="1">Belongs to the TER reductase family.</text>
</comment>